<name>ASD_METTH</name>
<proteinExistence type="inferred from homology"/>
<organism>
    <name type="scientific">Methanothermobacter thermautotrophicus (strain ATCC 29096 / DSM 1053 / JCM 10044 / NBRC 100330 / Delta H)</name>
    <name type="common">Methanobacterium thermoautotrophicum</name>
    <dbReference type="NCBI Taxonomy" id="187420"/>
    <lineage>
        <taxon>Archaea</taxon>
        <taxon>Methanobacteriati</taxon>
        <taxon>Methanobacteriota</taxon>
        <taxon>Methanomada group</taxon>
        <taxon>Methanobacteria</taxon>
        <taxon>Methanobacteriales</taxon>
        <taxon>Methanobacteriaceae</taxon>
        <taxon>Methanothermobacter</taxon>
    </lineage>
</organism>
<accession>O27105</accession>
<dbReference type="EC" id="4.1.1.-" evidence="1"/>
<dbReference type="EMBL" id="AE000666">
    <property type="protein sequence ID" value="AAB85522.1"/>
    <property type="molecule type" value="Genomic_DNA"/>
</dbReference>
<dbReference type="PIR" id="H69003">
    <property type="entry name" value="H69003"/>
</dbReference>
<dbReference type="RefSeq" id="WP_010876657.1">
    <property type="nucleotide sequence ID" value="NC_000916.1"/>
</dbReference>
<dbReference type="SMR" id="O27105"/>
<dbReference type="STRING" id="187420.MTH_1026"/>
<dbReference type="PaxDb" id="187420-MTH_1026"/>
<dbReference type="EnsemblBacteria" id="AAB85522">
    <property type="protein sequence ID" value="AAB85522"/>
    <property type="gene ID" value="MTH_1026"/>
</dbReference>
<dbReference type="GeneID" id="1471434"/>
<dbReference type="KEGG" id="mth:MTH_1026"/>
<dbReference type="PATRIC" id="fig|187420.15.peg.1009"/>
<dbReference type="HOGENOM" id="CLU_072492_0_0_2"/>
<dbReference type="InParanoid" id="O27105"/>
<dbReference type="BioCyc" id="MetaCyc:MONOMER-15157"/>
<dbReference type="Proteomes" id="UP000005223">
    <property type="component" value="Chromosome"/>
</dbReference>
<dbReference type="GO" id="GO:0005886">
    <property type="term" value="C:plasma membrane"/>
    <property type="evidence" value="ECO:0007669"/>
    <property type="project" value="UniProtKB-SubCell"/>
</dbReference>
<dbReference type="GO" id="GO:0004609">
    <property type="term" value="F:phosphatidylserine decarboxylase activity"/>
    <property type="evidence" value="ECO:0007669"/>
    <property type="project" value="InterPro"/>
</dbReference>
<dbReference type="GO" id="GO:0008654">
    <property type="term" value="P:phospholipid biosynthetic process"/>
    <property type="evidence" value="ECO:0007669"/>
    <property type="project" value="UniProtKB-UniRule"/>
</dbReference>
<dbReference type="HAMAP" id="MF_00664">
    <property type="entry name" value="PS_decarb_PSD_A"/>
    <property type="match status" value="1"/>
</dbReference>
<dbReference type="InterPro" id="IPR003817">
    <property type="entry name" value="PS_Dcarbxylase"/>
</dbReference>
<dbReference type="InterPro" id="IPR033175">
    <property type="entry name" value="PSD-A"/>
</dbReference>
<dbReference type="NCBIfam" id="TIGR00164">
    <property type="entry name" value="AS_decarb"/>
    <property type="match status" value="1"/>
</dbReference>
<dbReference type="NCBIfam" id="NF003685">
    <property type="entry name" value="PRK05305.2-5"/>
    <property type="match status" value="1"/>
</dbReference>
<dbReference type="PANTHER" id="PTHR35809">
    <property type="entry name" value="ARCHAETIDYLSERINE DECARBOXYLASE PROENZYME-RELATED"/>
    <property type="match status" value="1"/>
</dbReference>
<dbReference type="PANTHER" id="PTHR35809:SF1">
    <property type="entry name" value="ARCHAETIDYLSERINE DECARBOXYLASE PROENZYME-RELATED"/>
    <property type="match status" value="1"/>
</dbReference>
<dbReference type="Pfam" id="PF02666">
    <property type="entry name" value="PS_Dcarbxylase"/>
    <property type="match status" value="1"/>
</dbReference>
<keyword id="KW-1003">Cell membrane</keyword>
<keyword id="KW-0210">Decarboxylase</keyword>
<keyword id="KW-0444">Lipid biosynthesis</keyword>
<keyword id="KW-0443">Lipid metabolism</keyword>
<keyword id="KW-0456">Lyase</keyword>
<keyword id="KW-0472">Membrane</keyword>
<keyword id="KW-0594">Phospholipid biosynthesis</keyword>
<keyword id="KW-1208">Phospholipid metabolism</keyword>
<keyword id="KW-0670">Pyruvate</keyword>
<keyword id="KW-1185">Reference proteome</keyword>
<keyword id="KW-0865">Zymogen</keyword>
<feature type="chain" id="PRO_0000029831" description="Archaetidylserine decarboxylase beta chain" evidence="1">
    <location>
        <begin position="1"/>
        <end position="182"/>
    </location>
</feature>
<feature type="chain" id="PRO_0000029832" description="Archaetidylserine decarboxylase alpha chain" evidence="1">
    <location>
        <begin position="183"/>
        <end position="223"/>
    </location>
</feature>
<feature type="active site" description="Schiff-base intermediate with substrate; via pyruvic acid" evidence="1">
    <location>
        <position position="183"/>
    </location>
</feature>
<feature type="site" description="Cleavage (non-hydrolytic); by autocatalysis" evidence="1">
    <location>
        <begin position="182"/>
        <end position="183"/>
    </location>
</feature>
<feature type="modified residue" description="Pyruvic acid (Ser); by autocatalysis" evidence="1">
    <location>
        <position position="183"/>
    </location>
</feature>
<protein>
    <recommendedName>
        <fullName evidence="1">Putative archaetidylserine decarboxylase proenzyme</fullName>
        <ecNumber evidence="1">4.1.1.-</ecNumber>
    </recommendedName>
    <component>
        <recommendedName>
            <fullName evidence="1">Archaetidylserine decarboxylase alpha chain</fullName>
        </recommendedName>
    </component>
    <component>
        <recommendedName>
            <fullName evidence="1">Archaetidylserine decarboxylase beta chain</fullName>
        </recommendedName>
    </component>
</protein>
<comment type="function">
    <text evidence="1">Catalyzes the formation of archaetidylethanolamine (PtdEtn) from archaetidylserine (PtdSer).</text>
</comment>
<comment type="catalytic activity">
    <reaction evidence="1">
        <text>archaetidylserine + H(+) = archaetidylethanolamine + CO2</text>
        <dbReference type="Rhea" id="RHEA:51488"/>
        <dbReference type="ChEBI" id="CHEBI:15378"/>
        <dbReference type="ChEBI" id="CHEBI:16526"/>
        <dbReference type="ChEBI" id="CHEBI:71517"/>
        <dbReference type="ChEBI" id="CHEBI:134176"/>
    </reaction>
</comment>
<comment type="cofactor">
    <cofactor evidence="1">
        <name>pyruvate</name>
        <dbReference type="ChEBI" id="CHEBI:15361"/>
    </cofactor>
    <text evidence="1">Binds 1 pyruvoyl group covalently per subunit.</text>
</comment>
<comment type="subunit">
    <text evidence="1">Heterodimer of a large membrane-associated beta subunit and a small pyruvoyl-containing alpha subunit.</text>
</comment>
<comment type="subcellular location">
    <subcellularLocation>
        <location evidence="1">Cell membrane</location>
        <topology evidence="1">Peripheral membrane protein</topology>
    </subcellularLocation>
</comment>
<comment type="PTM">
    <text evidence="1">Is synthesized initially as an inactive proenzyme. Formation of the active enzyme involves a self-maturation process in which the active site pyruvoyl group is generated from an internal serine residue via an autocatalytic post-translational modification. Two non-identical subunits are generated from the proenzyme in this reaction, and the pyruvate is formed at the N-terminus of the alpha chain, which is derived from the carboxyl end of the proenzyme. The post-translation cleavage follows an unusual pathway, termed non-hydrolytic serinolysis, in which the side chain hydroxyl group of the serine supplies its oxygen atom to form the C-terminus of the beta chain, while the remainder of the serine residue undergoes an oxidative deamination to produce ammonia and the pyruvoyl prosthetic group on the alpha chain.</text>
</comment>
<comment type="similarity">
    <text evidence="1">Belongs to the phosphatidylserine decarboxylase family. PSD-A subfamily.</text>
</comment>
<sequence length="223" mass="24896">MLPKRASFLVSVATIPLLFGYHAIGILMFTVIAFMMQFFRDPDRIPPSDEDLIIAPADGRRLSGKIDRIERVGSDYPLIDRIFPDGSGGILISTFMSPFDVHVNRAPVSGKVIYTEHVDGRFQVARSRVLTENEKNLIVIKTDYGNVGVIQIAGFVARRIVQYVKEGEYVERGDRIGMIRFGSRVDLVLPENCEVLVKTGSRPMAGETVVARFNPGKKRVNVQ</sequence>
<gene>
    <name evidence="1" type="primary">asd</name>
    <name type="ordered locus">MTH_1026</name>
</gene>
<reference key="1">
    <citation type="journal article" date="1997" name="J. Bacteriol.">
        <title>Complete genome sequence of Methanobacterium thermoautotrophicum deltaH: functional analysis and comparative genomics.</title>
        <authorList>
            <person name="Smith D.R."/>
            <person name="Doucette-Stamm L.A."/>
            <person name="Deloughery C."/>
            <person name="Lee H.-M."/>
            <person name="Dubois J."/>
            <person name="Aldredge T."/>
            <person name="Bashirzadeh R."/>
            <person name="Blakely D."/>
            <person name="Cook R."/>
            <person name="Gilbert K."/>
            <person name="Harrison D."/>
            <person name="Hoang L."/>
            <person name="Keagle P."/>
            <person name="Lumm W."/>
            <person name="Pothier B."/>
            <person name="Qiu D."/>
            <person name="Spadafora R."/>
            <person name="Vicare R."/>
            <person name="Wang Y."/>
            <person name="Wierzbowski J."/>
            <person name="Gibson R."/>
            <person name="Jiwani N."/>
            <person name="Caruso A."/>
            <person name="Bush D."/>
            <person name="Safer H."/>
            <person name="Patwell D."/>
            <person name="Prabhakar S."/>
            <person name="McDougall S."/>
            <person name="Shimer G."/>
            <person name="Goyal A."/>
            <person name="Pietrovski S."/>
            <person name="Church G.M."/>
            <person name="Daniels C.J."/>
            <person name="Mao J.-I."/>
            <person name="Rice P."/>
            <person name="Noelling J."/>
            <person name="Reeve J.N."/>
        </authorList>
    </citation>
    <scope>NUCLEOTIDE SEQUENCE [LARGE SCALE GENOMIC DNA]</scope>
    <source>
        <strain>ATCC 29096 / DSM 1053 / JCM 10044 / NBRC 100330 / Delta H</strain>
    </source>
</reference>
<evidence type="ECO:0000255" key="1">
    <source>
        <dbReference type="HAMAP-Rule" id="MF_00664"/>
    </source>
</evidence>